<keyword id="KW-0997">Cell inner membrane</keyword>
<keyword id="KW-1003">Cell membrane</keyword>
<keyword id="KW-0472">Membrane</keyword>
<keyword id="KW-0520">NAD</keyword>
<keyword id="KW-0874">Quinone</keyword>
<keyword id="KW-1278">Translocase</keyword>
<keyword id="KW-0813">Transport</keyword>
<keyword id="KW-0830">Ubiquinone</keyword>
<accession>Q4UM07</accession>
<reference key="1">
    <citation type="journal article" date="2005" name="PLoS Biol.">
        <title>The genome sequence of Rickettsia felis identifies the first putative conjugative plasmid in an obligate intracellular parasite.</title>
        <authorList>
            <person name="Ogata H."/>
            <person name="Renesto P."/>
            <person name="Audic S."/>
            <person name="Robert C."/>
            <person name="Blanc G."/>
            <person name="Fournier P.-E."/>
            <person name="Parinello H."/>
            <person name="Claverie J.-M."/>
            <person name="Raoult D."/>
        </authorList>
    </citation>
    <scope>NUCLEOTIDE SEQUENCE [LARGE SCALE GENOMIC DNA]</scope>
    <source>
        <strain>ATCC VR-1525 / URRWXCal2</strain>
    </source>
</reference>
<name>NUOC_RICFE</name>
<organism>
    <name type="scientific">Rickettsia felis (strain ATCC VR-1525 / URRWXCal2)</name>
    <name type="common">Rickettsia azadi</name>
    <dbReference type="NCBI Taxonomy" id="315456"/>
    <lineage>
        <taxon>Bacteria</taxon>
        <taxon>Pseudomonadati</taxon>
        <taxon>Pseudomonadota</taxon>
        <taxon>Alphaproteobacteria</taxon>
        <taxon>Rickettsiales</taxon>
        <taxon>Rickettsiaceae</taxon>
        <taxon>Rickettsieae</taxon>
        <taxon>Rickettsia</taxon>
        <taxon>spotted fever group</taxon>
    </lineage>
</organism>
<feature type="chain" id="PRO_0000287859" description="NADH-quinone oxidoreductase subunit C">
    <location>
        <begin position="1"/>
        <end position="207"/>
    </location>
</feature>
<gene>
    <name evidence="1" type="primary">nuoC</name>
    <name type="ordered locus">RF_0565</name>
</gene>
<protein>
    <recommendedName>
        <fullName evidence="1">NADH-quinone oxidoreductase subunit C</fullName>
        <ecNumber evidence="1">7.1.1.-</ecNumber>
    </recommendedName>
    <alternativeName>
        <fullName evidence="1">NADH dehydrogenase I subunit C</fullName>
    </alternativeName>
    <alternativeName>
        <fullName evidence="1">NDH-1 subunit C</fullName>
    </alternativeName>
</protein>
<sequence>MTLDKLIEKLAAKSSILITPIIVKDYLAYQVEPNFLLPFLKALKESEELRFTVLTDLFGTDFPERDKRFEVIYNLLSLKLNKRLIIKVYISEKETIPSAMNIFNASCWYEREVYDMYGVNFDGNDDKRRILTDYEFEGHPLRKDFPLTGYTQVKYDEKLKKVAYEPVDLDIEYREFDFSSHWHSPSYVLPGDEKATDVIPAKAGIQK</sequence>
<comment type="function">
    <text evidence="1">NDH-1 shuttles electrons from NADH, via FMN and iron-sulfur (Fe-S) centers, to quinones in the respiratory chain. The immediate electron acceptor for the enzyme in this species is believed to be ubiquinone. Couples the redox reaction to proton translocation (for every two electrons transferred, four hydrogen ions are translocated across the cytoplasmic membrane), and thus conserves the redox energy in a proton gradient.</text>
</comment>
<comment type="catalytic activity">
    <reaction evidence="1">
        <text>a quinone + NADH + 5 H(+)(in) = a quinol + NAD(+) + 4 H(+)(out)</text>
        <dbReference type="Rhea" id="RHEA:57888"/>
        <dbReference type="ChEBI" id="CHEBI:15378"/>
        <dbReference type="ChEBI" id="CHEBI:24646"/>
        <dbReference type="ChEBI" id="CHEBI:57540"/>
        <dbReference type="ChEBI" id="CHEBI:57945"/>
        <dbReference type="ChEBI" id="CHEBI:132124"/>
    </reaction>
</comment>
<comment type="subunit">
    <text evidence="1">NDH-1 is composed of 14 different subunits. Subunits NuoB, C, D, E, F, and G constitute the peripheral sector of the complex.</text>
</comment>
<comment type="subcellular location">
    <subcellularLocation>
        <location evidence="1">Cell inner membrane</location>
        <topology evidence="1">Peripheral membrane protein</topology>
        <orientation evidence="1">Cytoplasmic side</orientation>
    </subcellularLocation>
</comment>
<comment type="similarity">
    <text evidence="1">Belongs to the complex I 30 kDa subunit family.</text>
</comment>
<dbReference type="EC" id="7.1.1.-" evidence="1"/>
<dbReference type="EMBL" id="CP000053">
    <property type="protein sequence ID" value="AAY61416.1"/>
    <property type="molecule type" value="Genomic_DNA"/>
</dbReference>
<dbReference type="SMR" id="Q4UM07"/>
<dbReference type="STRING" id="315456.RF_0565"/>
<dbReference type="KEGG" id="rfe:RF_0565"/>
<dbReference type="eggNOG" id="COG0852">
    <property type="taxonomic scope" value="Bacteria"/>
</dbReference>
<dbReference type="HOGENOM" id="CLU_042628_2_1_5"/>
<dbReference type="OrthoDB" id="9803286at2"/>
<dbReference type="BioCyc" id="MetaCyc:MONOMER-16396"/>
<dbReference type="Proteomes" id="UP000008548">
    <property type="component" value="Chromosome"/>
</dbReference>
<dbReference type="GO" id="GO:0005886">
    <property type="term" value="C:plasma membrane"/>
    <property type="evidence" value="ECO:0007669"/>
    <property type="project" value="UniProtKB-SubCell"/>
</dbReference>
<dbReference type="GO" id="GO:0008137">
    <property type="term" value="F:NADH dehydrogenase (ubiquinone) activity"/>
    <property type="evidence" value="ECO:0007669"/>
    <property type="project" value="InterPro"/>
</dbReference>
<dbReference type="GO" id="GO:0050136">
    <property type="term" value="F:NADH:ubiquinone reductase (non-electrogenic) activity"/>
    <property type="evidence" value="ECO:0007669"/>
    <property type="project" value="UniProtKB-UniRule"/>
</dbReference>
<dbReference type="GO" id="GO:0048038">
    <property type="term" value="F:quinone binding"/>
    <property type="evidence" value="ECO:0007669"/>
    <property type="project" value="UniProtKB-KW"/>
</dbReference>
<dbReference type="Gene3D" id="3.30.460.80">
    <property type="entry name" value="NADH:ubiquinone oxidoreductase, 30kDa subunit"/>
    <property type="match status" value="1"/>
</dbReference>
<dbReference type="HAMAP" id="MF_01357">
    <property type="entry name" value="NDH1_NuoC"/>
    <property type="match status" value="1"/>
</dbReference>
<dbReference type="InterPro" id="IPR010218">
    <property type="entry name" value="NADH_DH_suC"/>
</dbReference>
<dbReference type="InterPro" id="IPR037232">
    <property type="entry name" value="NADH_quin_OxRdtase_su_C/D-like"/>
</dbReference>
<dbReference type="InterPro" id="IPR001268">
    <property type="entry name" value="NADH_UbQ_OxRdtase_30kDa_su"/>
</dbReference>
<dbReference type="NCBIfam" id="TIGR01961">
    <property type="entry name" value="NuoC_fam"/>
    <property type="match status" value="1"/>
</dbReference>
<dbReference type="NCBIfam" id="NF004731">
    <property type="entry name" value="PRK06074.1-3"/>
    <property type="match status" value="1"/>
</dbReference>
<dbReference type="NCBIfam" id="NF004733">
    <property type="entry name" value="PRK06074.1-5"/>
    <property type="match status" value="1"/>
</dbReference>
<dbReference type="PANTHER" id="PTHR10884:SF14">
    <property type="entry name" value="NADH DEHYDROGENASE [UBIQUINONE] IRON-SULFUR PROTEIN 3, MITOCHONDRIAL"/>
    <property type="match status" value="1"/>
</dbReference>
<dbReference type="PANTHER" id="PTHR10884">
    <property type="entry name" value="NADH DEHYDROGENASE UBIQUINONE IRON-SULFUR PROTEIN 3"/>
    <property type="match status" value="1"/>
</dbReference>
<dbReference type="Pfam" id="PF00329">
    <property type="entry name" value="Complex1_30kDa"/>
    <property type="match status" value="1"/>
</dbReference>
<dbReference type="SUPFAM" id="SSF143243">
    <property type="entry name" value="Nqo5-like"/>
    <property type="match status" value="1"/>
</dbReference>
<proteinExistence type="inferred from homology"/>
<evidence type="ECO:0000255" key="1">
    <source>
        <dbReference type="HAMAP-Rule" id="MF_01357"/>
    </source>
</evidence>